<gene>
    <name evidence="2" type="primary">rpsL</name>
    <name type="ordered locus">M446_0358</name>
</gene>
<comment type="function">
    <text evidence="2">With S4 and S5 plays an important role in translational accuracy.</text>
</comment>
<comment type="function">
    <text evidence="2">Interacts with and stabilizes bases of the 16S rRNA that are involved in tRNA selection in the A site and with the mRNA backbone. Located at the interface of the 30S and 50S subunits, it traverses the body of the 30S subunit contacting proteins on the other side and probably holding the rRNA structure together. The combined cluster of proteins S8, S12 and S17 appears to hold together the shoulder and platform of the 30S subunit.</text>
</comment>
<comment type="subunit">
    <text evidence="2">Part of the 30S ribosomal subunit. Contacts proteins S8 and S17. May interact with IF1 in the 30S initiation complex.</text>
</comment>
<comment type="similarity">
    <text evidence="2">Belongs to the universal ribosomal protein uS12 family.</text>
</comment>
<evidence type="ECO:0000250" key="1"/>
<evidence type="ECO:0000255" key="2">
    <source>
        <dbReference type="HAMAP-Rule" id="MF_00403"/>
    </source>
</evidence>
<evidence type="ECO:0000305" key="3"/>
<sequence>MPTINQLIANPRKIQKSRNKVPALDACPQKRGVCTRVYTTTPKKPNSALRKVAKVRLTNGFEVIGYIPGEGHNLQEHSVVMIRGGRVKDLPGVRYHILRGVLDTQGVKNRKQRRSKYGAKRPK</sequence>
<proteinExistence type="inferred from homology"/>
<name>RS12_METS4</name>
<feature type="chain" id="PRO_1000194193" description="Small ribosomal subunit protein uS12">
    <location>
        <begin position="1"/>
        <end position="123"/>
    </location>
</feature>
<feature type="modified residue" description="3-methylthioaspartic acid" evidence="1">
    <location>
        <position position="89"/>
    </location>
</feature>
<organism>
    <name type="scientific">Methylobacterium sp. (strain 4-46)</name>
    <dbReference type="NCBI Taxonomy" id="426117"/>
    <lineage>
        <taxon>Bacteria</taxon>
        <taxon>Pseudomonadati</taxon>
        <taxon>Pseudomonadota</taxon>
        <taxon>Alphaproteobacteria</taxon>
        <taxon>Hyphomicrobiales</taxon>
        <taxon>Methylobacteriaceae</taxon>
        <taxon>Methylobacterium</taxon>
    </lineage>
</organism>
<protein>
    <recommendedName>
        <fullName evidence="2">Small ribosomal subunit protein uS12</fullName>
    </recommendedName>
    <alternativeName>
        <fullName evidence="3">30S ribosomal protein S12</fullName>
    </alternativeName>
</protein>
<keyword id="KW-0488">Methylation</keyword>
<keyword id="KW-0687">Ribonucleoprotein</keyword>
<keyword id="KW-0689">Ribosomal protein</keyword>
<keyword id="KW-0694">RNA-binding</keyword>
<keyword id="KW-0699">rRNA-binding</keyword>
<keyword id="KW-0820">tRNA-binding</keyword>
<dbReference type="EMBL" id="CP000943">
    <property type="protein sequence ID" value="ACA14929.1"/>
    <property type="molecule type" value="Genomic_DNA"/>
</dbReference>
<dbReference type="RefSeq" id="WP_012330347.1">
    <property type="nucleotide sequence ID" value="NC_010511.1"/>
</dbReference>
<dbReference type="SMR" id="B0UHX4"/>
<dbReference type="STRING" id="426117.M446_0358"/>
<dbReference type="KEGG" id="met:M446_0358"/>
<dbReference type="eggNOG" id="COG0048">
    <property type="taxonomic scope" value="Bacteria"/>
</dbReference>
<dbReference type="HOGENOM" id="CLU_104295_1_2_5"/>
<dbReference type="GO" id="GO:0015935">
    <property type="term" value="C:small ribosomal subunit"/>
    <property type="evidence" value="ECO:0007669"/>
    <property type="project" value="InterPro"/>
</dbReference>
<dbReference type="GO" id="GO:0019843">
    <property type="term" value="F:rRNA binding"/>
    <property type="evidence" value="ECO:0007669"/>
    <property type="project" value="UniProtKB-UniRule"/>
</dbReference>
<dbReference type="GO" id="GO:0003735">
    <property type="term" value="F:structural constituent of ribosome"/>
    <property type="evidence" value="ECO:0007669"/>
    <property type="project" value="InterPro"/>
</dbReference>
<dbReference type="GO" id="GO:0000049">
    <property type="term" value="F:tRNA binding"/>
    <property type="evidence" value="ECO:0007669"/>
    <property type="project" value="UniProtKB-UniRule"/>
</dbReference>
<dbReference type="GO" id="GO:0006412">
    <property type="term" value="P:translation"/>
    <property type="evidence" value="ECO:0007669"/>
    <property type="project" value="UniProtKB-UniRule"/>
</dbReference>
<dbReference type="CDD" id="cd03368">
    <property type="entry name" value="Ribosomal_S12"/>
    <property type="match status" value="1"/>
</dbReference>
<dbReference type="FunFam" id="2.40.50.140:FF:000001">
    <property type="entry name" value="30S ribosomal protein S12"/>
    <property type="match status" value="1"/>
</dbReference>
<dbReference type="Gene3D" id="2.40.50.140">
    <property type="entry name" value="Nucleic acid-binding proteins"/>
    <property type="match status" value="1"/>
</dbReference>
<dbReference type="HAMAP" id="MF_00403_B">
    <property type="entry name" value="Ribosomal_uS12_B"/>
    <property type="match status" value="1"/>
</dbReference>
<dbReference type="InterPro" id="IPR012340">
    <property type="entry name" value="NA-bd_OB-fold"/>
</dbReference>
<dbReference type="InterPro" id="IPR006032">
    <property type="entry name" value="Ribosomal_uS12"/>
</dbReference>
<dbReference type="InterPro" id="IPR005679">
    <property type="entry name" value="Ribosomal_uS12_bac"/>
</dbReference>
<dbReference type="NCBIfam" id="TIGR00981">
    <property type="entry name" value="rpsL_bact"/>
    <property type="match status" value="1"/>
</dbReference>
<dbReference type="PANTHER" id="PTHR11652">
    <property type="entry name" value="30S RIBOSOMAL PROTEIN S12 FAMILY MEMBER"/>
    <property type="match status" value="1"/>
</dbReference>
<dbReference type="Pfam" id="PF00164">
    <property type="entry name" value="Ribosom_S12_S23"/>
    <property type="match status" value="1"/>
</dbReference>
<dbReference type="PIRSF" id="PIRSF002133">
    <property type="entry name" value="Ribosomal_S12/S23"/>
    <property type="match status" value="1"/>
</dbReference>
<dbReference type="PRINTS" id="PR01034">
    <property type="entry name" value="RIBOSOMALS12"/>
</dbReference>
<dbReference type="SUPFAM" id="SSF50249">
    <property type="entry name" value="Nucleic acid-binding proteins"/>
    <property type="match status" value="1"/>
</dbReference>
<dbReference type="PROSITE" id="PS00055">
    <property type="entry name" value="RIBOSOMAL_S12"/>
    <property type="match status" value="1"/>
</dbReference>
<reference key="1">
    <citation type="submission" date="2008-02" db="EMBL/GenBank/DDBJ databases">
        <title>Complete sequence of chromosome of Methylobacterium sp. 4-46.</title>
        <authorList>
            <consortium name="US DOE Joint Genome Institute"/>
            <person name="Copeland A."/>
            <person name="Lucas S."/>
            <person name="Lapidus A."/>
            <person name="Glavina del Rio T."/>
            <person name="Dalin E."/>
            <person name="Tice H."/>
            <person name="Bruce D."/>
            <person name="Goodwin L."/>
            <person name="Pitluck S."/>
            <person name="Chertkov O."/>
            <person name="Brettin T."/>
            <person name="Detter J.C."/>
            <person name="Han C."/>
            <person name="Kuske C.R."/>
            <person name="Schmutz J."/>
            <person name="Larimer F."/>
            <person name="Land M."/>
            <person name="Hauser L."/>
            <person name="Kyrpides N."/>
            <person name="Ivanova N."/>
            <person name="Marx C.J."/>
            <person name="Richardson P."/>
        </authorList>
    </citation>
    <scope>NUCLEOTIDE SEQUENCE [LARGE SCALE GENOMIC DNA]</scope>
    <source>
        <strain>4-46</strain>
    </source>
</reference>
<accession>B0UHX4</accession>